<name>PTPA1_EREGS</name>
<proteinExistence type="inferred from homology"/>
<comment type="function">
    <text evidence="1">PPIases accelerate the folding of proteins. It catalyzes the cis-trans isomerization of proline imidic peptide bonds in oligopeptides. Acts as a regulatory subunit for PP2A-like phosphatases modulating their activity or substrate specificity, probably by inducing a conformational change in the catalytic subunit, a direct target of the PPIase. Can reactivate inactive phosphatase PP2A-phosphatase methylesterase complexes (PP2Ai) in presence of ATP and Mg(2+) by dissociating the inactive form from the complex (By similarity).</text>
</comment>
<comment type="catalytic activity">
    <reaction>
        <text>[protein]-peptidylproline (omega=180) = [protein]-peptidylproline (omega=0)</text>
        <dbReference type="Rhea" id="RHEA:16237"/>
        <dbReference type="Rhea" id="RHEA-COMP:10747"/>
        <dbReference type="Rhea" id="RHEA-COMP:10748"/>
        <dbReference type="ChEBI" id="CHEBI:83833"/>
        <dbReference type="ChEBI" id="CHEBI:83834"/>
        <dbReference type="EC" id="5.2.1.8"/>
    </reaction>
</comment>
<comment type="subcellular location">
    <subcellularLocation>
        <location evidence="1">Cytoplasm</location>
    </subcellularLocation>
    <subcellularLocation>
        <location evidence="1">Nucleus</location>
    </subcellularLocation>
</comment>
<comment type="similarity">
    <text evidence="3">Belongs to the PTPA-type PPIase family.</text>
</comment>
<gene>
    <name type="primary">RRD1</name>
    <name type="ordered locus">AFR293C</name>
</gene>
<organism>
    <name type="scientific">Eremothecium gossypii (strain ATCC 10895 / CBS 109.51 / FGSC 9923 / NRRL Y-1056)</name>
    <name type="common">Yeast</name>
    <name type="synonym">Ashbya gossypii</name>
    <dbReference type="NCBI Taxonomy" id="284811"/>
    <lineage>
        <taxon>Eukaryota</taxon>
        <taxon>Fungi</taxon>
        <taxon>Dikarya</taxon>
        <taxon>Ascomycota</taxon>
        <taxon>Saccharomycotina</taxon>
        <taxon>Saccharomycetes</taxon>
        <taxon>Saccharomycetales</taxon>
        <taxon>Saccharomycetaceae</taxon>
        <taxon>Eremothecium</taxon>
    </lineage>
</organism>
<evidence type="ECO:0000250" key="1"/>
<evidence type="ECO:0000256" key="2">
    <source>
        <dbReference type="SAM" id="MobiDB-lite"/>
    </source>
</evidence>
<evidence type="ECO:0000305" key="3"/>
<accession>Q753L9</accession>
<sequence length="365" mass="41327">MEFSVEGTQFSPPVKRIFDTAGTHDFQKSLTMYRLQSHLERYLKLVQGQKIPKSSQNRAVVRFVCILERLDALMDETPPRTGSARRFGDLACRDWHDRMQGELDGLLETLLPEAARRSAAELRYYLGSAFGSRERLDYGTGHELAFLAVVVALDMLGLWTEDKFTGEDMLYVWARYYALVHRLILTYNLEPAGSHGVWGLDDHLHLAYILGASQWAQDRNVPMQPSDILDPKAVARYSETNLYCNSIAFLLRVKTGHFAQHSPMLHDIAQTVPTWSKVTTGLIKMYRVEVLNKFPVVQHFWFGTGFFPWVDMAHGMSLPNYEAPSETSEKPAAGTAHTTTTTMPPPRMTANCGYGPLGRLVTPRR</sequence>
<feature type="chain" id="PRO_0000226092" description="Serine/threonine-protein phosphatase 2A activator 1">
    <location>
        <begin position="1"/>
        <end position="365"/>
    </location>
</feature>
<feature type="region of interest" description="Disordered" evidence="2">
    <location>
        <begin position="321"/>
        <end position="349"/>
    </location>
</feature>
<feature type="compositionally biased region" description="Low complexity" evidence="2">
    <location>
        <begin position="331"/>
        <end position="342"/>
    </location>
</feature>
<protein>
    <recommendedName>
        <fullName>Serine/threonine-protein phosphatase 2A activator 1</fullName>
        <ecNumber>5.2.1.8</ecNumber>
    </recommendedName>
    <alternativeName>
        <fullName>Peptidyl-prolyl cis-trans isomerase PTPA-1</fullName>
        <shortName>PPIase PTPA-1</shortName>
        <shortName>Rotamase PTPA-1</shortName>
    </alternativeName>
    <alternativeName>
        <fullName>Phosphotyrosyl phosphatase activator 1</fullName>
    </alternativeName>
</protein>
<dbReference type="EC" id="5.2.1.8"/>
<dbReference type="EMBL" id="AE016819">
    <property type="protein sequence ID" value="AAS53664.1"/>
    <property type="molecule type" value="Genomic_DNA"/>
</dbReference>
<dbReference type="RefSeq" id="NP_985840.1">
    <property type="nucleotide sequence ID" value="NM_211195.1"/>
</dbReference>
<dbReference type="SMR" id="Q753L9"/>
<dbReference type="FunCoup" id="Q753L9">
    <property type="interactions" value="112"/>
</dbReference>
<dbReference type="STRING" id="284811.Q753L9"/>
<dbReference type="EnsemblFungi" id="AAS53664">
    <property type="protein sequence ID" value="AAS53664"/>
    <property type="gene ID" value="AGOS_AFR293C"/>
</dbReference>
<dbReference type="GeneID" id="4622103"/>
<dbReference type="KEGG" id="ago:AGOS_AFR293C"/>
<dbReference type="eggNOG" id="KOG2867">
    <property type="taxonomic scope" value="Eukaryota"/>
</dbReference>
<dbReference type="HOGENOM" id="CLU_030733_2_1_1"/>
<dbReference type="InParanoid" id="Q753L9"/>
<dbReference type="OMA" id="ACRDWHA"/>
<dbReference type="OrthoDB" id="16120at2759"/>
<dbReference type="Proteomes" id="UP000000591">
    <property type="component" value="Chromosome VI"/>
</dbReference>
<dbReference type="GO" id="GO:0000785">
    <property type="term" value="C:chromatin"/>
    <property type="evidence" value="ECO:0007669"/>
    <property type="project" value="EnsemblFungi"/>
</dbReference>
<dbReference type="GO" id="GO:0005737">
    <property type="term" value="C:cytoplasm"/>
    <property type="evidence" value="ECO:0000318"/>
    <property type="project" value="GO_Central"/>
</dbReference>
<dbReference type="GO" id="GO:0005634">
    <property type="term" value="C:nucleus"/>
    <property type="evidence" value="ECO:0000318"/>
    <property type="project" value="GO_Central"/>
</dbReference>
<dbReference type="GO" id="GO:0000159">
    <property type="term" value="C:protein phosphatase type 2A complex"/>
    <property type="evidence" value="ECO:0000318"/>
    <property type="project" value="GO_Central"/>
</dbReference>
<dbReference type="GO" id="GO:0003755">
    <property type="term" value="F:peptidyl-prolyl cis-trans isomerase activity"/>
    <property type="evidence" value="ECO:0000318"/>
    <property type="project" value="GO_Central"/>
</dbReference>
<dbReference type="GO" id="GO:0008160">
    <property type="term" value="F:protein tyrosine phosphatase activator activity"/>
    <property type="evidence" value="ECO:0000318"/>
    <property type="project" value="GO_Central"/>
</dbReference>
<dbReference type="GO" id="GO:0006914">
    <property type="term" value="P:autophagy"/>
    <property type="evidence" value="ECO:0007669"/>
    <property type="project" value="EnsemblFungi"/>
</dbReference>
<dbReference type="GO" id="GO:0006281">
    <property type="term" value="P:DNA repair"/>
    <property type="evidence" value="ECO:0007669"/>
    <property type="project" value="EnsemblFungi"/>
</dbReference>
<dbReference type="GO" id="GO:0000082">
    <property type="term" value="P:G1/S transition of mitotic cell cycle"/>
    <property type="evidence" value="ECO:0007669"/>
    <property type="project" value="EnsemblFungi"/>
</dbReference>
<dbReference type="GO" id="GO:0007052">
    <property type="term" value="P:mitotic spindle organization"/>
    <property type="evidence" value="ECO:0000318"/>
    <property type="project" value="GO_Central"/>
</dbReference>
<dbReference type="GO" id="GO:0006357">
    <property type="term" value="P:regulation of transcription by RNA polymerase II"/>
    <property type="evidence" value="ECO:0007669"/>
    <property type="project" value="EnsemblFungi"/>
</dbReference>
<dbReference type="CDD" id="cd04087">
    <property type="entry name" value="PTPA"/>
    <property type="match status" value="1"/>
</dbReference>
<dbReference type="FunFam" id="1.20.120.1150:FF:000004">
    <property type="entry name" value="Serine/threonine-protein phosphatase 2A activator 1"/>
    <property type="match status" value="1"/>
</dbReference>
<dbReference type="Gene3D" id="1.20.120.1150">
    <property type="match status" value="1"/>
</dbReference>
<dbReference type="InterPro" id="IPR004327">
    <property type="entry name" value="Phstyr_phstse_ac"/>
</dbReference>
<dbReference type="InterPro" id="IPR043170">
    <property type="entry name" value="PTPA_C_lid"/>
</dbReference>
<dbReference type="InterPro" id="IPR037218">
    <property type="entry name" value="PTPA_sf"/>
</dbReference>
<dbReference type="PANTHER" id="PTHR10012">
    <property type="entry name" value="SERINE/THREONINE-PROTEIN PHOSPHATASE 2A REGULATORY SUBUNIT B"/>
    <property type="match status" value="1"/>
</dbReference>
<dbReference type="PANTHER" id="PTHR10012:SF3">
    <property type="entry name" value="SERINE_THREONINE-PROTEIN PHOSPHATASE 2A ACTIVATOR 1"/>
    <property type="match status" value="1"/>
</dbReference>
<dbReference type="Pfam" id="PF03095">
    <property type="entry name" value="PTPA"/>
    <property type="match status" value="1"/>
</dbReference>
<dbReference type="PIRSF" id="PIRSF016325">
    <property type="entry name" value="Phstyr_phstse_ac"/>
    <property type="match status" value="1"/>
</dbReference>
<dbReference type="SUPFAM" id="SSF140984">
    <property type="entry name" value="PTPA-like"/>
    <property type="match status" value="1"/>
</dbReference>
<reference key="1">
    <citation type="journal article" date="2004" name="Science">
        <title>The Ashbya gossypii genome as a tool for mapping the ancient Saccharomyces cerevisiae genome.</title>
        <authorList>
            <person name="Dietrich F.S."/>
            <person name="Voegeli S."/>
            <person name="Brachat S."/>
            <person name="Lerch A."/>
            <person name="Gates K."/>
            <person name="Steiner S."/>
            <person name="Mohr C."/>
            <person name="Poehlmann R."/>
            <person name="Luedi P."/>
            <person name="Choi S."/>
            <person name="Wing R.A."/>
            <person name="Flavier A."/>
            <person name="Gaffney T.D."/>
            <person name="Philippsen P."/>
        </authorList>
    </citation>
    <scope>NUCLEOTIDE SEQUENCE [LARGE SCALE GENOMIC DNA]</scope>
    <source>
        <strain>ATCC 10895 / CBS 109.51 / FGSC 9923 / NRRL Y-1056</strain>
    </source>
</reference>
<reference key="2">
    <citation type="journal article" date="2013" name="G3 (Bethesda)">
        <title>Genomes of Ashbya fungi isolated from insects reveal four mating-type loci, numerous translocations, lack of transposons, and distinct gene duplications.</title>
        <authorList>
            <person name="Dietrich F.S."/>
            <person name="Voegeli S."/>
            <person name="Kuo S."/>
            <person name="Philippsen P."/>
        </authorList>
    </citation>
    <scope>GENOME REANNOTATION</scope>
    <source>
        <strain>ATCC 10895 / CBS 109.51 / FGSC 9923 / NRRL Y-1056</strain>
    </source>
</reference>
<keyword id="KW-0963">Cytoplasm</keyword>
<keyword id="KW-0413">Isomerase</keyword>
<keyword id="KW-0539">Nucleus</keyword>
<keyword id="KW-1185">Reference proteome</keyword>
<keyword id="KW-0697">Rotamase</keyword>